<proteinExistence type="inferred from homology"/>
<reference key="1">
    <citation type="journal article" date="2001" name="Nature">
        <title>Genome sequence of enterohaemorrhagic Escherichia coli O157:H7.</title>
        <authorList>
            <person name="Perna N.T."/>
            <person name="Plunkett G. III"/>
            <person name="Burland V."/>
            <person name="Mau B."/>
            <person name="Glasner J.D."/>
            <person name="Rose D.J."/>
            <person name="Mayhew G.F."/>
            <person name="Evans P.S."/>
            <person name="Gregor J."/>
            <person name="Kirkpatrick H.A."/>
            <person name="Posfai G."/>
            <person name="Hackett J."/>
            <person name="Klink S."/>
            <person name="Boutin A."/>
            <person name="Shao Y."/>
            <person name="Miller L."/>
            <person name="Grotbeck E.J."/>
            <person name="Davis N.W."/>
            <person name="Lim A."/>
            <person name="Dimalanta E.T."/>
            <person name="Potamousis K."/>
            <person name="Apodaca J."/>
            <person name="Anantharaman T.S."/>
            <person name="Lin J."/>
            <person name="Yen G."/>
            <person name="Schwartz D.C."/>
            <person name="Welch R.A."/>
            <person name="Blattner F.R."/>
        </authorList>
    </citation>
    <scope>NUCLEOTIDE SEQUENCE [LARGE SCALE GENOMIC DNA]</scope>
    <source>
        <strain>O157:H7 / EDL933 / ATCC 700927 / EHEC</strain>
    </source>
</reference>
<reference key="2">
    <citation type="journal article" date="2001" name="DNA Res.">
        <title>Complete genome sequence of enterohemorrhagic Escherichia coli O157:H7 and genomic comparison with a laboratory strain K-12.</title>
        <authorList>
            <person name="Hayashi T."/>
            <person name="Makino K."/>
            <person name="Ohnishi M."/>
            <person name="Kurokawa K."/>
            <person name="Ishii K."/>
            <person name="Yokoyama K."/>
            <person name="Han C.-G."/>
            <person name="Ohtsubo E."/>
            <person name="Nakayama K."/>
            <person name="Murata T."/>
            <person name="Tanaka M."/>
            <person name="Tobe T."/>
            <person name="Iida T."/>
            <person name="Takami H."/>
            <person name="Honda T."/>
            <person name="Sasakawa C."/>
            <person name="Ogasawara N."/>
            <person name="Yasunaga T."/>
            <person name="Kuhara S."/>
            <person name="Shiba T."/>
            <person name="Hattori M."/>
            <person name="Shinagawa H."/>
        </authorList>
    </citation>
    <scope>NUCLEOTIDE SEQUENCE [LARGE SCALE GENOMIC DNA]</scope>
    <source>
        <strain>O157:H7 / Sakai / RIMD 0509952 / EHEC</strain>
    </source>
</reference>
<organism>
    <name type="scientific">Escherichia coli O157:H7</name>
    <dbReference type="NCBI Taxonomy" id="83334"/>
    <lineage>
        <taxon>Bacteria</taxon>
        <taxon>Pseudomonadati</taxon>
        <taxon>Pseudomonadota</taxon>
        <taxon>Gammaproteobacteria</taxon>
        <taxon>Enterobacterales</taxon>
        <taxon>Enterobacteriaceae</taxon>
        <taxon>Escherichia</taxon>
    </lineage>
</organism>
<comment type="function">
    <text evidence="1">Plays a central role in chromosome condensation, segregation and cell cycle progression. Functions as a homodimer, which is essential for chromosome partition. Involved in negative DNA supercoiling in vivo, and by this means organize and compact chromosomes. May achieve or facilitate chromosome segregation by condensation DNA from both sides of a centrally located replisome during cell division.</text>
</comment>
<comment type="subunit">
    <text evidence="1">Homodimerization via its hinge domain. Binds to DNA via its C-terminal region. Interacts, and probably forms a ternary complex, with MukE and MukF via its C-terminal region. The complex formation is stimulated by calcium or magnesium. Interacts with tubulin-related protein FtsZ.</text>
</comment>
<comment type="subcellular location">
    <subcellularLocation>
        <location evidence="1">Cytoplasm</location>
        <location evidence="1">Nucleoid</location>
    </subcellularLocation>
    <text evidence="1">Restricted to the nucleoid region.</text>
</comment>
<comment type="domain">
    <text evidence="1">The hinge domain, which separates the large intramolecular coiled coil regions, allows the homodimerization, forming a V-shaped homodimer.</text>
</comment>
<comment type="similarity">
    <text evidence="1">Belongs to the SMC family. MukB subfamily.</text>
</comment>
<keyword id="KW-0067">ATP-binding</keyword>
<keyword id="KW-0131">Cell cycle</keyword>
<keyword id="KW-0132">Cell division</keyword>
<keyword id="KW-0159">Chromosome partition</keyword>
<keyword id="KW-0175">Coiled coil</keyword>
<keyword id="KW-0963">Cytoplasm</keyword>
<keyword id="KW-0226">DNA condensation</keyword>
<keyword id="KW-0238">DNA-binding</keyword>
<keyword id="KW-0547">Nucleotide-binding</keyword>
<keyword id="KW-1185">Reference proteome</keyword>
<dbReference type="EMBL" id="AE005174">
    <property type="protein sequence ID" value="AAG55409.1"/>
    <property type="molecule type" value="Genomic_DNA"/>
</dbReference>
<dbReference type="EMBL" id="BA000007">
    <property type="protein sequence ID" value="BAB34430.1"/>
    <property type="molecule type" value="Genomic_DNA"/>
</dbReference>
<dbReference type="PIR" id="E85618">
    <property type="entry name" value="E85618"/>
</dbReference>
<dbReference type="PIR" id="G90754">
    <property type="entry name" value="G90754"/>
</dbReference>
<dbReference type="RefSeq" id="NP_309034.1">
    <property type="nucleotide sequence ID" value="NC_002695.1"/>
</dbReference>
<dbReference type="RefSeq" id="WP_000572668.1">
    <property type="nucleotide sequence ID" value="NZ_VOAI01000006.1"/>
</dbReference>
<dbReference type="SMR" id="Q8XDG0"/>
<dbReference type="STRING" id="155864.Z1271"/>
<dbReference type="GeneID" id="917753"/>
<dbReference type="KEGG" id="ece:Z1271"/>
<dbReference type="KEGG" id="ecs:ECs_1007"/>
<dbReference type="PATRIC" id="fig|386585.9.peg.1127"/>
<dbReference type="eggNOG" id="COG3096">
    <property type="taxonomic scope" value="Bacteria"/>
</dbReference>
<dbReference type="HOGENOM" id="CLU_004430_0_0_6"/>
<dbReference type="OMA" id="FIAVYQH"/>
<dbReference type="Proteomes" id="UP000000558">
    <property type="component" value="Chromosome"/>
</dbReference>
<dbReference type="Proteomes" id="UP000002519">
    <property type="component" value="Chromosome"/>
</dbReference>
<dbReference type="GO" id="GO:0005737">
    <property type="term" value="C:cytoplasm"/>
    <property type="evidence" value="ECO:0007669"/>
    <property type="project" value="UniProtKB-UniRule"/>
</dbReference>
<dbReference type="GO" id="GO:0009295">
    <property type="term" value="C:nucleoid"/>
    <property type="evidence" value="ECO:0007669"/>
    <property type="project" value="UniProtKB-SubCell"/>
</dbReference>
<dbReference type="GO" id="GO:0005524">
    <property type="term" value="F:ATP binding"/>
    <property type="evidence" value="ECO:0007669"/>
    <property type="project" value="UniProtKB-UniRule"/>
</dbReference>
<dbReference type="GO" id="GO:0003677">
    <property type="term" value="F:DNA binding"/>
    <property type="evidence" value="ECO:0007669"/>
    <property type="project" value="UniProtKB-UniRule"/>
</dbReference>
<dbReference type="GO" id="GO:0051301">
    <property type="term" value="P:cell division"/>
    <property type="evidence" value="ECO:0007669"/>
    <property type="project" value="UniProtKB-KW"/>
</dbReference>
<dbReference type="GO" id="GO:0030261">
    <property type="term" value="P:chromosome condensation"/>
    <property type="evidence" value="ECO:0007669"/>
    <property type="project" value="UniProtKB-KW"/>
</dbReference>
<dbReference type="GO" id="GO:0007059">
    <property type="term" value="P:chromosome segregation"/>
    <property type="evidence" value="ECO:0007669"/>
    <property type="project" value="UniProtKB-UniRule"/>
</dbReference>
<dbReference type="GO" id="GO:0006260">
    <property type="term" value="P:DNA replication"/>
    <property type="evidence" value="ECO:0007669"/>
    <property type="project" value="UniProtKB-UniRule"/>
</dbReference>
<dbReference type="FunFam" id="1.20.58.850:FF:000001">
    <property type="entry name" value="Chromosome partition protein MukB"/>
    <property type="match status" value="1"/>
</dbReference>
<dbReference type="FunFam" id="3.30.70.3500:FF:000001">
    <property type="entry name" value="Chromosome partition protein MukB"/>
    <property type="match status" value="1"/>
</dbReference>
<dbReference type="FunFam" id="3.40.1140.10:FF:000001">
    <property type="entry name" value="Chromosome partition protein MukB"/>
    <property type="match status" value="1"/>
</dbReference>
<dbReference type="FunFam" id="3.40.1140.10:FF:000002">
    <property type="entry name" value="Chromosome partition protein MukB"/>
    <property type="match status" value="1"/>
</dbReference>
<dbReference type="Gene3D" id="1.20.58.850">
    <property type="match status" value="1"/>
</dbReference>
<dbReference type="Gene3D" id="3.40.1140.10">
    <property type="match status" value="2"/>
</dbReference>
<dbReference type="Gene3D" id="1.20.5.420">
    <property type="entry name" value="Immunoglobulin FC, subunit C"/>
    <property type="match status" value="1"/>
</dbReference>
<dbReference type="Gene3D" id="3.30.70.3500">
    <property type="entry name" value="MukB, hinge domain"/>
    <property type="match status" value="1"/>
</dbReference>
<dbReference type="HAMAP" id="MF_01800">
    <property type="entry name" value="MukB"/>
    <property type="match status" value="1"/>
</dbReference>
<dbReference type="InterPro" id="IPR012090">
    <property type="entry name" value="MukB"/>
</dbReference>
<dbReference type="InterPro" id="IPR050308">
    <property type="entry name" value="MukB/SMC"/>
</dbReference>
<dbReference type="InterPro" id="IPR032520">
    <property type="entry name" value="MukB_hinge"/>
</dbReference>
<dbReference type="InterPro" id="IPR042501">
    <property type="entry name" value="MukB_hinge_sf"/>
</dbReference>
<dbReference type="InterPro" id="IPR007406">
    <property type="entry name" value="MukB_N_dom"/>
</dbReference>
<dbReference type="InterPro" id="IPR027417">
    <property type="entry name" value="P-loop_NTPase"/>
</dbReference>
<dbReference type="NCBIfam" id="NF003422">
    <property type="entry name" value="PRK04863.1"/>
    <property type="match status" value="1"/>
</dbReference>
<dbReference type="PANTHER" id="PTHR42963">
    <property type="entry name" value="CHROMOSOME PARTITION PROTEIN MUKB"/>
    <property type="match status" value="1"/>
</dbReference>
<dbReference type="PANTHER" id="PTHR42963:SF1">
    <property type="entry name" value="DUF4476 DOMAIN-CONTAINING PROTEIN"/>
    <property type="match status" value="1"/>
</dbReference>
<dbReference type="Pfam" id="PF04310">
    <property type="entry name" value="MukB"/>
    <property type="match status" value="1"/>
</dbReference>
<dbReference type="Pfam" id="PF16330">
    <property type="entry name" value="MukB_hinge"/>
    <property type="match status" value="1"/>
</dbReference>
<dbReference type="Pfam" id="PF13558">
    <property type="entry name" value="SbcC_Walker_B"/>
    <property type="match status" value="1"/>
</dbReference>
<dbReference type="PIRSF" id="PIRSF005246">
    <property type="entry name" value="MukB"/>
    <property type="match status" value="1"/>
</dbReference>
<dbReference type="SUPFAM" id="SSF52540">
    <property type="entry name" value="P-loop containing nucleoside triphosphate hydrolases"/>
    <property type="match status" value="2"/>
</dbReference>
<sequence length="1486" mass="170201">MIERGKFRSLTLINWNGFFARTFDLDELVTTLSGGNGAGKSTTMAAFVTALIPDLTLLHFRNTTEAGATSGSRDKGLHGKLKAGVCYSMLDTINSRHQRVVVGVRLQQVAGRDRKVDIKPFAIQGLPMSVQPTQLVTETLNERQARVLPLNELKDKLEAMEGVQFKQFNSITDYHSLMFDLGIIARRLRSASDRSKFYRLIEASLYGGISSAITRSLRDYLLPENSGVRKAFQDMEAALRENRMTLEAIRVTQSDRDLFKHLISEATNYVAADYMRHANERRVHLDKALEFRRELHTSRQQLAAEQYKHVDMARELAEHNGAEGDLEADYQAASDHLNLVQTALRQQEKIERYEADLDELQIRLEEQNEVVAEAIERQEENEARAEAAELEVDELKSQLADYQQALDVQQTRAIQYNQAIAALNRAKELCHLPDLTADSAAEWLETFQAKELEATEKMLSLEQKMSMAQTAHSQFEQAYQLVVAINGPLARNEAWDVARELLREGVDQRHLAEQVQPLRMRLSELEQRLREQQEAERLLADFCKRQGKNFDIDELEALHQELEARIASLSDSVSNAREERMALRQEQEQLQSRIQSLMQRAPVWLAAQNSLNQLSEQCGEEFTSSQDVTEYLQQLLEREREAIVERDEVGARKNAVDEEIERLSQPGGSEDQRLNALAERFGGVLLSEIYDDVSLEDAPYFSALYGPSRHAIVVPDLSQVTEHLEGLTDCPEDLYLIEGDPQSFDDSVFSVDELEKAVVVKIADRQWRYSRFPEVPLFGRAARESRIESLHAEREVLSERFATLSFDVQKTQRLHQAFSRFIGSHLAVAFESDPEAEIRQLNSRRVELERALSNHENDNQQQRIQFEQAKEGVTALNRILPRLNLLADDSLADRVDEIRERLDEAQEAARFVQQFGNQLAKLEPIVSVLQSDPEQFEQLKEDYAYSQQMQRDARQQAFALTEVVQRRAHFSYSDSAEMLSGNSDLNEKLRERLEQAEAERTRAREALRGHAAQLSQYNQVLASLKSSYDTKKELLNDLQRELQDIGVRADSGAEERARIRRDELHAQLSNNRSRRNQLEKALTFCEAEMDNLTRKLRKLERDYFEMREQVVTAKAGWCAVMRMVKDNGVERRLHRRELAYLSADDLRSMSDKALGALRLAVADNEHLRDVLRMSEDPKRPERKIQFFVAVYQHLRERIRQDIIRTDDPVEAIEQMEIELSRLTEELTSREQKLAISSRSVANIIRKTIQREQNRIRMLNQGLQNVSFGQVNSVRLNVNVRETHAMLLDVLSEQHEQHQDLFNSNRLTFSEALAKLYQRLNPQIDMGQRTPQTIGEELLDYRNYLEMEVEVNRGSDGWLRAESGALSTGEAIGTGMSILVMVVQSWEDESRRLRGKDISPCRLLFLDEAARLDARSIATLFELCERLQMQLIIAAPENISPEKGTTYKLVRKVFQNTEHVHVVGLRGFAPQLPETLPGSDEAPSQAS</sequence>
<gene>
    <name evidence="1" type="primary">mukB</name>
    <name type="ordered locus">Z1271</name>
    <name type="ordered locus">ECs1007</name>
</gene>
<name>MUKB_ECO57</name>
<feature type="chain" id="PRO_0000068215" description="Chromosome partition protein MukB">
    <location>
        <begin position="1"/>
        <end position="1486"/>
    </location>
</feature>
<feature type="region of interest" description="Flexible hinge" evidence="1">
    <location>
        <begin position="666"/>
        <end position="783"/>
    </location>
</feature>
<feature type="coiled-coil region" evidence="1">
    <location>
        <begin position="326"/>
        <end position="418"/>
    </location>
</feature>
<feature type="coiled-coil region" evidence="1">
    <location>
        <begin position="444"/>
        <end position="480"/>
    </location>
</feature>
<feature type="coiled-coil region" evidence="1">
    <location>
        <begin position="509"/>
        <end position="603"/>
    </location>
</feature>
<feature type="coiled-coil region" evidence="1">
    <location>
        <begin position="835"/>
        <end position="923"/>
    </location>
</feature>
<feature type="coiled-coil region" evidence="1">
    <location>
        <begin position="977"/>
        <end position="1115"/>
    </location>
</feature>
<feature type="coiled-coil region" evidence="1">
    <location>
        <begin position="1209"/>
        <end position="1266"/>
    </location>
</feature>
<feature type="binding site" evidence="1">
    <location>
        <begin position="34"/>
        <end position="41"/>
    </location>
    <ligand>
        <name>ATP</name>
        <dbReference type="ChEBI" id="CHEBI:30616"/>
    </ligand>
</feature>
<protein>
    <recommendedName>
        <fullName evidence="1">Chromosome partition protein MukB</fullName>
    </recommendedName>
    <alternativeName>
        <fullName evidence="1">Structural maintenance of chromosome-related protein</fullName>
    </alternativeName>
</protein>
<accession>Q8XDG0</accession>
<evidence type="ECO:0000255" key="1">
    <source>
        <dbReference type="HAMAP-Rule" id="MF_01800"/>
    </source>
</evidence>